<keyword id="KW-0025">Alternative splicing</keyword>
<keyword id="KW-0963">Cytoplasm</keyword>
<keyword id="KW-0968">Cytoplasmic vesicle</keyword>
<keyword id="KW-0597">Phosphoprotein</keyword>
<keyword id="KW-0653">Protein transport</keyword>
<keyword id="KW-1185">Reference proteome</keyword>
<keyword id="KW-0677">Repeat</keyword>
<keyword id="KW-0813">Transport</keyword>
<reference key="1">
    <citation type="journal article" date="2009" name="PLoS Biol.">
        <title>Lineage-specific biology revealed by a finished genome assembly of the mouse.</title>
        <authorList>
            <person name="Church D.M."/>
            <person name="Goodstadt L."/>
            <person name="Hillier L.W."/>
            <person name="Zody M.C."/>
            <person name="Goldstein S."/>
            <person name="She X."/>
            <person name="Bult C.J."/>
            <person name="Agarwala R."/>
            <person name="Cherry J.L."/>
            <person name="DiCuccio M."/>
            <person name="Hlavina W."/>
            <person name="Kapustin Y."/>
            <person name="Meric P."/>
            <person name="Maglott D."/>
            <person name="Birtle Z."/>
            <person name="Marques A.C."/>
            <person name="Graves T."/>
            <person name="Zhou S."/>
            <person name="Teague B."/>
            <person name="Potamousis K."/>
            <person name="Churas C."/>
            <person name="Place M."/>
            <person name="Herschleb J."/>
            <person name="Runnheim R."/>
            <person name="Forrest D."/>
            <person name="Amos-Landgraf J."/>
            <person name="Schwartz D.C."/>
            <person name="Cheng Z."/>
            <person name="Lindblad-Toh K."/>
            <person name="Eichler E.E."/>
            <person name="Ponting C.P."/>
        </authorList>
    </citation>
    <scope>NUCLEOTIDE SEQUENCE [LARGE SCALE GENOMIC DNA] (ISOFORMS 1 AND 2)</scope>
    <source>
        <strain>C57BL/6J</strain>
    </source>
</reference>
<reference key="2">
    <citation type="journal article" date="2004" name="Genome Res.">
        <title>The status, quality, and expansion of the NIH full-length cDNA project: the Mammalian Gene Collection (MGC).</title>
        <authorList>
            <consortium name="The MGC Project Team"/>
        </authorList>
    </citation>
    <scope>NUCLEOTIDE SEQUENCE [LARGE SCALE MRNA] (ISOFORM 2)</scope>
    <source>
        <strain>C57BL/6J</strain>
        <tissue>Brain</tissue>
        <tissue>Mammary gland</tissue>
    </source>
</reference>
<reference key="3">
    <citation type="journal article" date="2007" name="Proc. Natl. Acad. Sci. U.S.A.">
        <title>Large-scale phosphorylation analysis of mouse liver.</title>
        <authorList>
            <person name="Villen J."/>
            <person name="Beausoleil S.A."/>
            <person name="Gerber S.A."/>
            <person name="Gygi S.P."/>
        </authorList>
    </citation>
    <scope>PHOSPHORYLATION [LARGE SCALE ANALYSIS] AT SER-395</scope>
    <scope>IDENTIFICATION BY MASS SPECTROMETRY [LARGE SCALE ANALYSIS]</scope>
    <source>
        <tissue>Liver</tissue>
    </source>
</reference>
<reference key="4">
    <citation type="journal article" date="2009" name="Immunity">
        <title>The phagosomal proteome in interferon-gamma-activated macrophages.</title>
        <authorList>
            <person name="Trost M."/>
            <person name="English L."/>
            <person name="Lemieux S."/>
            <person name="Courcelles M."/>
            <person name="Desjardins M."/>
            <person name="Thibault P."/>
        </authorList>
    </citation>
    <scope>PHOSPHORYLATION [LARGE SCALE ANALYSIS] AT SER-395</scope>
    <scope>IDENTIFICATION BY MASS SPECTROMETRY [LARGE SCALE ANALYSIS]</scope>
</reference>
<reference key="5">
    <citation type="journal article" date="2010" name="Cell">
        <title>A tissue-specific atlas of mouse protein phosphorylation and expression.</title>
        <authorList>
            <person name="Huttlin E.L."/>
            <person name="Jedrychowski M.P."/>
            <person name="Elias J.E."/>
            <person name="Goswami T."/>
            <person name="Rad R."/>
            <person name="Beausoleil S.A."/>
            <person name="Villen J."/>
            <person name="Haas W."/>
            <person name="Sowa M.E."/>
            <person name="Gygi S.P."/>
        </authorList>
    </citation>
    <scope>PHOSPHORYLATION [LARGE SCALE ANALYSIS] AT SER-395</scope>
    <scope>IDENTIFICATION BY MASS SPECTROMETRY [LARGE SCALE ANALYSIS]</scope>
    <source>
        <tissue>Brain</tissue>
        <tissue>Kidney</tissue>
        <tissue>Liver</tissue>
        <tissue>Lung</tissue>
        <tissue>Pancreas</tissue>
        <tissue>Spleen</tissue>
        <tissue>Testis</tissue>
    </source>
</reference>
<evidence type="ECO:0000250" key="1"/>
<evidence type="ECO:0000250" key="2">
    <source>
        <dbReference type="UniProtKB" id="Q6ULP2"/>
    </source>
</evidence>
<evidence type="ECO:0000255" key="3"/>
<evidence type="ECO:0000256" key="4">
    <source>
        <dbReference type="SAM" id="MobiDB-lite"/>
    </source>
</evidence>
<evidence type="ECO:0000303" key="5">
    <source>
    </source>
</evidence>
<evidence type="ECO:0000305" key="6"/>
<evidence type="ECO:0007744" key="7">
    <source>
    </source>
</evidence>
<evidence type="ECO:0007744" key="8">
    <source>
    </source>
</evidence>
<evidence type="ECO:0007744" key="9">
    <source>
    </source>
</evidence>
<organism>
    <name type="scientific">Mus musculus</name>
    <name type="common">Mouse</name>
    <dbReference type="NCBI Taxonomy" id="10090"/>
    <lineage>
        <taxon>Eukaryota</taxon>
        <taxon>Metazoa</taxon>
        <taxon>Chordata</taxon>
        <taxon>Craniata</taxon>
        <taxon>Vertebrata</taxon>
        <taxon>Euteleostomi</taxon>
        <taxon>Mammalia</taxon>
        <taxon>Eutheria</taxon>
        <taxon>Euarchontoglires</taxon>
        <taxon>Glires</taxon>
        <taxon>Rodentia</taxon>
        <taxon>Myomorpha</taxon>
        <taxon>Muroidea</taxon>
        <taxon>Muridae</taxon>
        <taxon>Murinae</taxon>
        <taxon>Mus</taxon>
        <taxon>Mus</taxon>
    </lineage>
</organism>
<feature type="chain" id="PRO_0000064489" description="Aftiphilin">
    <location>
        <begin position="1"/>
        <end position="931"/>
    </location>
</feature>
<feature type="region of interest" description="Disordered" evidence="4">
    <location>
        <begin position="1"/>
        <end position="49"/>
    </location>
</feature>
<feature type="region of interest" description="Disordered" evidence="4">
    <location>
        <begin position="371"/>
        <end position="454"/>
    </location>
</feature>
<feature type="region of interest" description="Disordered" evidence="4">
    <location>
        <begin position="494"/>
        <end position="561"/>
    </location>
</feature>
<feature type="region of interest" description="Disordered" evidence="4">
    <location>
        <begin position="599"/>
        <end position="636"/>
    </location>
</feature>
<feature type="region of interest" description="Clathrin-binding" evidence="3">
    <location>
        <begin position="821"/>
        <end position="825"/>
    </location>
</feature>
<feature type="short sequence motif" description="WXXF motif 1">
    <location>
        <begin position="28"/>
        <end position="31"/>
    </location>
</feature>
<feature type="short sequence motif" description="WXXF motif 2">
    <location>
        <begin position="433"/>
        <end position="436"/>
    </location>
</feature>
<feature type="short sequence motif" description="WXXF motif 3">
    <location>
        <begin position="476"/>
        <end position="479"/>
    </location>
</feature>
<feature type="short sequence motif" description="CLTCL1/Clathrin-binding" evidence="2">
    <location>
        <begin position="712"/>
        <end position="714"/>
    </location>
</feature>
<feature type="compositionally biased region" description="Acidic residues" evidence="4">
    <location>
        <begin position="19"/>
        <end position="29"/>
    </location>
</feature>
<feature type="compositionally biased region" description="Low complexity" evidence="4">
    <location>
        <begin position="33"/>
        <end position="45"/>
    </location>
</feature>
<feature type="compositionally biased region" description="Polar residues" evidence="4">
    <location>
        <begin position="371"/>
        <end position="381"/>
    </location>
</feature>
<feature type="compositionally biased region" description="Polar residues" evidence="4">
    <location>
        <begin position="439"/>
        <end position="454"/>
    </location>
</feature>
<feature type="compositionally biased region" description="Basic and acidic residues" evidence="4">
    <location>
        <begin position="516"/>
        <end position="530"/>
    </location>
</feature>
<feature type="compositionally biased region" description="Low complexity" evidence="4">
    <location>
        <begin position="618"/>
        <end position="631"/>
    </location>
</feature>
<feature type="modified residue" description="Phosphoserine" evidence="2">
    <location>
        <position position="151"/>
    </location>
</feature>
<feature type="modified residue" description="Phosphoserine" evidence="7 8 9">
    <location>
        <position position="395"/>
    </location>
</feature>
<feature type="modified residue" description="Phosphothreonine" evidence="2">
    <location>
        <position position="613"/>
    </location>
</feature>
<feature type="splice variant" id="VSP_013242" description="In isoform 2." evidence="5">
    <location>
        <begin position="815"/>
        <end position="841"/>
    </location>
</feature>
<comment type="function">
    <text evidence="2">Component of clathrin-coated vesicles (By similarity). Component of the aftiphilin/p200/gamma-synergin complex, which plays roles in AP1G1/AP-1-mediated protein trafficking including the trafficking of transferrin from early to recycling endosomes, and the membrane trafficking of furin and the lysosomal enzyme cathepsin D between the trans-Golgi network (TGN) and endosomes (By similarity).</text>
</comment>
<comment type="subunit">
    <text evidence="2">Self-associates (By similarity). Interacts with GGA1 (via GAE domain) (By similarity). Interacts with GGA3 (via GAE domain), AP1G1 (via GAE domain) and AP1G2 (via GAE domain) (By similarity). Component of the aftiphilin/p200/gamma-synergin complex, at least composed of AFTPH/aftiphilin, HEATR5B/p200a and SYNRG/gamma-synergin, which plays a role in the AP1G1/AP-1-mediated protein trafficking from early to recycling endosomes (By similarity). Within the complex interacts with HEATR5B/p200a and SYNRG/gamma-synergin; the interactions are direct (By similarity). Interacts with AP1G1/AP-1; the interaction is required to recruit AFTPH/aftiphilin to the perinuclear region of the cell (By similarity). Interacts with CLTCL1/Clathrin (By similarity).</text>
</comment>
<comment type="subcellular location">
    <subcellularLocation>
        <location evidence="2">Cytoplasm</location>
    </subcellularLocation>
    <subcellularLocation>
        <location evidence="2">Cytoplasm</location>
        <location evidence="2">Perinuclear region</location>
    </subcellularLocation>
    <subcellularLocation>
        <location evidence="2">Cytoplasmic vesicle</location>
        <location evidence="2">Clathrin-coated vesicle</location>
    </subcellularLocation>
    <text evidence="2">Co-localizes with AP1G1/AP-1 in the cytoplasm (By similarity). Recruited to the perinuclear region by AP1G1/AP-1 (By similarity).</text>
</comment>
<comment type="alternative products">
    <event type="alternative splicing"/>
    <isoform>
        <id>Q80WT5-1</id>
        <name>1</name>
        <sequence type="displayed"/>
    </isoform>
    <isoform>
        <id>Q80WT5-2</id>
        <name>2</name>
        <sequence type="described" ref="VSP_013242"/>
    </isoform>
</comment>
<comment type="domain">
    <text evidence="1">The WXXF motifs mediate binding of accessory proteins to the ear-domain of AP-1, GGAs and AP-2 through hydrophobic interactions. Selective binding to the GAE domains of AP-1 or to the alpha-ear domain of AP-2 is tuned by the acidic context surrounding the motif and the properties of the second residue of the motif itself (By similarity).</text>
</comment>
<comment type="sequence caution" evidence="6">
    <conflict type="erroneous gene model prediction">
        <sequence resource="EMBL-CDS" id="CAI24910"/>
    </conflict>
</comment>
<comment type="sequence caution" evidence="6">
    <conflict type="erroneous gene model prediction">
        <sequence resource="EMBL-CDS" id="CAI25738"/>
    </conflict>
</comment>
<accession>Q80WT5</accession>
<accession>Q5SSE6</accession>
<accession>Q99KJ1</accession>
<proteinExistence type="evidence at protein level"/>
<dbReference type="EMBL" id="AL663115">
    <property type="protein sequence ID" value="CAI25737.1"/>
    <property type="molecule type" value="Genomic_DNA"/>
</dbReference>
<dbReference type="EMBL" id="AL645599">
    <property type="protein sequence ID" value="CAI25737.1"/>
    <property type="status" value="JOINED"/>
    <property type="molecule type" value="Genomic_DNA"/>
</dbReference>
<dbReference type="EMBL" id="AL663115">
    <property type="protein sequence ID" value="CAI25738.1"/>
    <property type="status" value="ALT_SEQ"/>
    <property type="molecule type" value="Genomic_DNA"/>
</dbReference>
<dbReference type="EMBL" id="AL645599">
    <property type="protein sequence ID" value="CAI25738.1"/>
    <property type="status" value="JOINED"/>
    <property type="molecule type" value="Genomic_DNA"/>
</dbReference>
<dbReference type="EMBL" id="AL645599">
    <property type="protein sequence ID" value="CAI24909.1"/>
    <property type="molecule type" value="Genomic_DNA"/>
</dbReference>
<dbReference type="EMBL" id="AL663115">
    <property type="protein sequence ID" value="CAI24909.1"/>
    <property type="status" value="JOINED"/>
    <property type="molecule type" value="Genomic_DNA"/>
</dbReference>
<dbReference type="EMBL" id="AL645599">
    <property type="protein sequence ID" value="CAI24910.1"/>
    <property type="status" value="ALT_SEQ"/>
    <property type="molecule type" value="Genomic_DNA"/>
</dbReference>
<dbReference type="EMBL" id="AL663115">
    <property type="protein sequence ID" value="CAI24910.1"/>
    <property type="status" value="JOINED"/>
    <property type="molecule type" value="Genomic_DNA"/>
</dbReference>
<dbReference type="EMBL" id="BC004630">
    <property type="protein sequence ID" value="AAH04630.1"/>
    <property type="molecule type" value="mRNA"/>
</dbReference>
<dbReference type="EMBL" id="BC052036">
    <property type="protein sequence ID" value="AAH52036.1"/>
    <property type="molecule type" value="mRNA"/>
</dbReference>
<dbReference type="CCDS" id="CCDS24459.1">
    <molecule id="Q80WT5-2"/>
</dbReference>
<dbReference type="CCDS" id="CCDS70146.1">
    <molecule id="Q80WT5-1"/>
</dbReference>
<dbReference type="RefSeq" id="NP_001239432.1">
    <property type="nucleotide sequence ID" value="NM_001252503.2"/>
</dbReference>
<dbReference type="RefSeq" id="NP_001277474.1">
    <molecule id="Q80WT5-1"/>
    <property type="nucleotide sequence ID" value="NM_001290545.1"/>
</dbReference>
<dbReference type="RefSeq" id="NP_852076.1">
    <molecule id="Q80WT5-2"/>
    <property type="nucleotide sequence ID" value="NM_181411.4"/>
</dbReference>
<dbReference type="BioGRID" id="229758">
    <property type="interactions" value="3"/>
</dbReference>
<dbReference type="FunCoup" id="Q80WT5">
    <property type="interactions" value="3168"/>
</dbReference>
<dbReference type="MINT" id="Q80WT5"/>
<dbReference type="STRING" id="10090.ENSMUSP00000121612"/>
<dbReference type="GlyGen" id="Q80WT5">
    <property type="glycosylation" value="1 site, 1 O-linked glycan (1 site)"/>
</dbReference>
<dbReference type="iPTMnet" id="Q80WT5"/>
<dbReference type="PhosphoSitePlus" id="Q80WT5"/>
<dbReference type="SwissPalm" id="Q80WT5"/>
<dbReference type="jPOST" id="Q80WT5"/>
<dbReference type="PaxDb" id="10090-ENSMUSP00000036778"/>
<dbReference type="PeptideAtlas" id="Q80WT5"/>
<dbReference type="ProteomicsDB" id="285621">
    <molecule id="Q80WT5-1"/>
</dbReference>
<dbReference type="ProteomicsDB" id="285622">
    <molecule id="Q80WT5-2"/>
</dbReference>
<dbReference type="Pumba" id="Q80WT5"/>
<dbReference type="Antibodypedia" id="30831">
    <property type="antibodies" value="105 antibodies from 21 providers"/>
</dbReference>
<dbReference type="DNASU" id="216549"/>
<dbReference type="Ensembl" id="ENSMUST00000035350.12">
    <molecule id="Q80WT5-2"/>
    <property type="protein sequence ID" value="ENSMUSP00000036778.6"/>
    <property type="gene ID" value="ENSMUSG00000049659.16"/>
</dbReference>
<dbReference type="Ensembl" id="ENSMUST00000146722.9">
    <molecule id="Q80WT5-1"/>
    <property type="protein sequence ID" value="ENSMUSP00000121612.3"/>
    <property type="gene ID" value="ENSMUSG00000049659.16"/>
</dbReference>
<dbReference type="GeneID" id="216549"/>
<dbReference type="KEGG" id="mmu:216549"/>
<dbReference type="UCSC" id="uc007idh.3">
    <molecule id="Q80WT5-2"/>
    <property type="organism name" value="mouse"/>
</dbReference>
<dbReference type="UCSC" id="uc056yjx.1">
    <molecule id="Q80WT5-1"/>
    <property type="organism name" value="mouse"/>
</dbReference>
<dbReference type="AGR" id="MGI:1923012"/>
<dbReference type="CTD" id="54812"/>
<dbReference type="MGI" id="MGI:1923012">
    <property type="gene designation" value="Aftph"/>
</dbReference>
<dbReference type="VEuPathDB" id="HostDB:ENSMUSG00000049659"/>
<dbReference type="eggNOG" id="ENOG502QPXF">
    <property type="taxonomic scope" value="Eukaryota"/>
</dbReference>
<dbReference type="GeneTree" id="ENSGT00940000154186"/>
<dbReference type="HOGENOM" id="CLU_017041_0_0_1"/>
<dbReference type="InParanoid" id="Q80WT5"/>
<dbReference type="OMA" id="FRTDMNI"/>
<dbReference type="OrthoDB" id="5917212at2759"/>
<dbReference type="PhylomeDB" id="Q80WT5"/>
<dbReference type="TreeFam" id="TF331532"/>
<dbReference type="BioGRID-ORCS" id="216549">
    <property type="hits" value="3 hits in 76 CRISPR screens"/>
</dbReference>
<dbReference type="ChiTaRS" id="Aftph">
    <property type="organism name" value="mouse"/>
</dbReference>
<dbReference type="PRO" id="PR:Q80WT5"/>
<dbReference type="Proteomes" id="UP000000589">
    <property type="component" value="Chromosome 11"/>
</dbReference>
<dbReference type="RNAct" id="Q80WT5">
    <property type="molecule type" value="protein"/>
</dbReference>
<dbReference type="Bgee" id="ENSMUSG00000049659">
    <property type="expression patterns" value="Expressed in dentate gyrus of hippocampal formation granule cell and 243 other cell types or tissues"/>
</dbReference>
<dbReference type="ExpressionAtlas" id="Q80WT5">
    <property type="expression patterns" value="baseline and differential"/>
</dbReference>
<dbReference type="GO" id="GO:0030121">
    <property type="term" value="C:AP-1 adaptor complex"/>
    <property type="evidence" value="ECO:0007669"/>
    <property type="project" value="Ensembl"/>
</dbReference>
<dbReference type="GO" id="GO:0005829">
    <property type="term" value="C:cytosol"/>
    <property type="evidence" value="ECO:0007669"/>
    <property type="project" value="Ensembl"/>
</dbReference>
<dbReference type="GO" id="GO:0005654">
    <property type="term" value="C:nucleoplasm"/>
    <property type="evidence" value="ECO:0007669"/>
    <property type="project" value="Ensembl"/>
</dbReference>
<dbReference type="GO" id="GO:0048471">
    <property type="term" value="C:perinuclear region of cytoplasm"/>
    <property type="evidence" value="ECO:0007669"/>
    <property type="project" value="UniProtKB-SubCell"/>
</dbReference>
<dbReference type="GO" id="GO:0032588">
    <property type="term" value="C:trans-Golgi network membrane"/>
    <property type="evidence" value="ECO:0007669"/>
    <property type="project" value="InterPro"/>
</dbReference>
<dbReference type="GO" id="GO:0030276">
    <property type="term" value="F:clathrin binding"/>
    <property type="evidence" value="ECO:0007669"/>
    <property type="project" value="Ensembl"/>
</dbReference>
<dbReference type="GO" id="GO:0046907">
    <property type="term" value="P:intracellular transport"/>
    <property type="evidence" value="ECO:0007669"/>
    <property type="project" value="InterPro"/>
</dbReference>
<dbReference type="GO" id="GO:0015031">
    <property type="term" value="P:protein transport"/>
    <property type="evidence" value="ECO:0007669"/>
    <property type="project" value="UniProtKB-KW"/>
</dbReference>
<dbReference type="InterPro" id="IPR046359">
    <property type="entry name" value="Aftin-like"/>
</dbReference>
<dbReference type="InterPro" id="IPR029205">
    <property type="entry name" value="Clathrin-bd"/>
</dbReference>
<dbReference type="PANTHER" id="PTHR16156:SF9">
    <property type="entry name" value="AFTIPHILIN"/>
    <property type="match status" value="1"/>
</dbReference>
<dbReference type="PANTHER" id="PTHR16156">
    <property type="entry name" value="AFTIPHILIN A-RELATED"/>
    <property type="match status" value="1"/>
</dbReference>
<dbReference type="Pfam" id="PF15045">
    <property type="entry name" value="Clathrin_bdg"/>
    <property type="match status" value="1"/>
</dbReference>
<name>AFTIN_MOUSE</name>
<gene>
    <name type="primary">Aftph</name>
    <name type="synonym">Afth</name>
</gene>
<sequence length="931" mass="101131">MEPDIIRMYSSSPPPLDNGAEDDEEDEFGEFGGFSEVSPSGVGFVDFDTPDYTRPKEDFVPSNHFMPIHEYSEDVDSLTSFKSVQNGNDKDITAELSTPVKSQSDVVLSTTSKEMIPSKTLDPSIDGMESLEDLDKVVVQGPSTGQLRSFSPGDFRTDKNIVHQTKQLESCNGEKPPCLEILTNGFAGLETVNPQGTDDLDNVADSKGSKPLNTCGTECILESAASHATEFADFSTFSQTERTQLEEIECPVLNDGDTLTIQGNSKGPRVKELNCVKEVTLDGSFEDTGNTEREHQVCVSEIHAVADRGLSVEKQDLQTLQQDEFLNSRIQSEAWSLVDSSENSEAITKERCKMEKNDLFASKCADLSMDSVKTSDVNEIGSSKEENRKLTNPKSPDPDPTGQNALDDSAASMKNGDSGNGFVTCHDTNEDDFGDFGTANGTTPPFVTSTQDSMSDVTFEDSSEHFLHLSEPGDDFGEFEDTNAVSCQEEMRFTESDLRQTSDGLSEECPLAGESGGKDSKPDSKLKNGQDSEFGDFDSVPNTQGSAFQDSDDFADFSSAGPSQAVDWNAFEDEQKDGCSWAAFGDQQETESHHLKEVWQSQRTDETMGTLGTPKMHSVSSAASKGAVASGHLQEPGTSVQTALLNRLERIFEACFPSVFVPDVEEEVSSLKHLLETHSSPAKTREALADRGELRGVWTELQDIHDAHGLRYQWGGSHSNKKLLCSLGIDTRNILFTGNKKQPVIVPMYAAGLGMLEPTKEPLKPLSAAEKIASIGQTTVMTPEINTCTSDPFQESLPPVQFDWSSSGLTNPLDASGGSTLLNLDFFGPVDDSSSSSSTIPGVDPELYELTTAKLETSTSSLRVTDAFAKLMSTVEKTSTSTRKPKREEHLSEEAMKVIASLPDLTFMHAKVLMFPATLTPSMSSQEQADA</sequence>
<protein>
    <recommendedName>
        <fullName>Aftiphilin</fullName>
    </recommendedName>
</protein>